<keyword id="KW-0067">ATP-binding</keyword>
<keyword id="KW-0418">Kinase</keyword>
<keyword id="KW-0441">Lipid A biosynthesis</keyword>
<keyword id="KW-0444">Lipid biosynthesis</keyword>
<keyword id="KW-0443">Lipid metabolism</keyword>
<keyword id="KW-0547">Nucleotide-binding</keyword>
<keyword id="KW-1185">Reference proteome</keyword>
<keyword id="KW-0808">Transferase</keyword>
<reference key="1">
    <citation type="journal article" date="2007" name="PLoS Biol.">
        <title>Evolution of symbiotic bacteria in the distal human intestine.</title>
        <authorList>
            <person name="Xu J."/>
            <person name="Mahowald M.A."/>
            <person name="Ley R.E."/>
            <person name="Lozupone C.A."/>
            <person name="Hamady M."/>
            <person name="Martens E.C."/>
            <person name="Henrissat B."/>
            <person name="Coutinho P.M."/>
            <person name="Minx P."/>
            <person name="Latreille P."/>
            <person name="Cordum H."/>
            <person name="Van Brunt A."/>
            <person name="Kim K."/>
            <person name="Fulton R.S."/>
            <person name="Fulton L.A."/>
            <person name="Clifton S.W."/>
            <person name="Wilson R.K."/>
            <person name="Knight R.D."/>
            <person name="Gordon J.I."/>
        </authorList>
    </citation>
    <scope>NUCLEOTIDE SEQUENCE [LARGE SCALE GENOMIC DNA]</scope>
    <source>
        <strain>ATCC 8503 / DSM 20701 / CIP 104284 / JCM 5825 / NCTC 11152</strain>
    </source>
</reference>
<evidence type="ECO:0000255" key="1">
    <source>
        <dbReference type="HAMAP-Rule" id="MF_00409"/>
    </source>
</evidence>
<organism>
    <name type="scientific">Parabacteroides distasonis (strain ATCC 8503 / DSM 20701 / CIP 104284 / JCM 5825 / NCTC 11152)</name>
    <dbReference type="NCBI Taxonomy" id="435591"/>
    <lineage>
        <taxon>Bacteria</taxon>
        <taxon>Pseudomonadati</taxon>
        <taxon>Bacteroidota</taxon>
        <taxon>Bacteroidia</taxon>
        <taxon>Bacteroidales</taxon>
        <taxon>Tannerellaceae</taxon>
        <taxon>Parabacteroides</taxon>
    </lineage>
</organism>
<proteinExistence type="inferred from homology"/>
<accession>A6LIV7</accession>
<gene>
    <name evidence="1" type="primary">lpxK</name>
    <name type="ordered locus">BDI_3942</name>
</gene>
<name>LPXK_PARD8</name>
<comment type="function">
    <text evidence="1">Transfers the gamma-phosphate of ATP to the 4'-position of a tetraacyldisaccharide 1-phosphate intermediate (termed DS-1-P) to form tetraacyldisaccharide 1,4'-bis-phosphate (lipid IVA).</text>
</comment>
<comment type="catalytic activity">
    <reaction evidence="1">
        <text>a lipid A disaccharide + ATP = a lipid IVA + ADP + H(+)</text>
        <dbReference type="Rhea" id="RHEA:67840"/>
        <dbReference type="ChEBI" id="CHEBI:15378"/>
        <dbReference type="ChEBI" id="CHEBI:30616"/>
        <dbReference type="ChEBI" id="CHEBI:176343"/>
        <dbReference type="ChEBI" id="CHEBI:176425"/>
        <dbReference type="ChEBI" id="CHEBI:456216"/>
        <dbReference type="EC" id="2.7.1.130"/>
    </reaction>
</comment>
<comment type="pathway">
    <text evidence="1">Glycolipid biosynthesis; lipid IV(A) biosynthesis; lipid IV(A) from (3R)-3-hydroxytetradecanoyl-[acyl-carrier-protein] and UDP-N-acetyl-alpha-D-glucosamine: step 6/6.</text>
</comment>
<comment type="similarity">
    <text evidence="1">Belongs to the LpxK family.</text>
</comment>
<feature type="chain" id="PRO_0000340843" description="Tetraacyldisaccharide 4'-kinase">
    <location>
        <begin position="1"/>
        <end position="369"/>
    </location>
</feature>
<feature type="binding site" evidence="1">
    <location>
        <begin position="52"/>
        <end position="59"/>
    </location>
    <ligand>
        <name>ATP</name>
        <dbReference type="ChEBI" id="CHEBI:30616"/>
    </ligand>
</feature>
<sequence>MLTDHTIKFNKLLTPFSFLYGIGVRFRNQLFDWKVLRTERYDLPIICVGNLTVGGTGKTPHTEYIIRLIKDRYRVAVLSRGYKRKTSGFLLADQRSTSKDIGDEPYQMKRKFPDILVAVDADRRRGIRNLLALPENKRPDVIVLDDAFQHRYVAPTLNILLTDCHRLYTQDRLLPAGRLREPMDGARRADVIIVTKCESCIQPIDFRIIEEDIHLSAYQELYFSRILYGELEPVFSGKAPRRTLKGLASTTEVLLVSGIASPAPLEKEIHKYTEHVTSLIFPDHHAFDRHDIQKIQTAFKRLTSTSKLIIITEKDAARLRDLPSLPMEWFSHLYCLPITVGFCMDREKQFQELIVKHIDTRIKNHPILR</sequence>
<protein>
    <recommendedName>
        <fullName evidence="1">Tetraacyldisaccharide 4'-kinase</fullName>
        <ecNumber evidence="1">2.7.1.130</ecNumber>
    </recommendedName>
    <alternativeName>
        <fullName evidence="1">Lipid A 4'-kinase</fullName>
    </alternativeName>
</protein>
<dbReference type="EC" id="2.7.1.130" evidence="1"/>
<dbReference type="EMBL" id="CP000140">
    <property type="protein sequence ID" value="ABR45621.1"/>
    <property type="molecule type" value="Genomic_DNA"/>
</dbReference>
<dbReference type="RefSeq" id="WP_012056234.1">
    <property type="nucleotide sequence ID" value="NC_009615.1"/>
</dbReference>
<dbReference type="SMR" id="A6LIV7"/>
<dbReference type="STRING" id="435591.BDI_3942"/>
<dbReference type="PaxDb" id="435591-BDI_3942"/>
<dbReference type="KEGG" id="pdi:BDI_3942"/>
<dbReference type="PATRIC" id="fig|435591.13.peg.3892"/>
<dbReference type="eggNOG" id="COG1663">
    <property type="taxonomic scope" value="Bacteria"/>
</dbReference>
<dbReference type="HOGENOM" id="CLU_038816_6_0_10"/>
<dbReference type="BioCyc" id="PDIS435591:G1G5A-4053-MONOMER"/>
<dbReference type="UniPathway" id="UPA00359">
    <property type="reaction ID" value="UER00482"/>
</dbReference>
<dbReference type="Proteomes" id="UP000000566">
    <property type="component" value="Chromosome"/>
</dbReference>
<dbReference type="GO" id="GO:0005886">
    <property type="term" value="C:plasma membrane"/>
    <property type="evidence" value="ECO:0007669"/>
    <property type="project" value="TreeGrafter"/>
</dbReference>
<dbReference type="GO" id="GO:0005524">
    <property type="term" value="F:ATP binding"/>
    <property type="evidence" value="ECO:0007669"/>
    <property type="project" value="UniProtKB-UniRule"/>
</dbReference>
<dbReference type="GO" id="GO:0009029">
    <property type="term" value="F:tetraacyldisaccharide 4'-kinase activity"/>
    <property type="evidence" value="ECO:0007669"/>
    <property type="project" value="UniProtKB-UniRule"/>
</dbReference>
<dbReference type="GO" id="GO:0009245">
    <property type="term" value="P:lipid A biosynthetic process"/>
    <property type="evidence" value="ECO:0007669"/>
    <property type="project" value="UniProtKB-UniRule"/>
</dbReference>
<dbReference type="GO" id="GO:0009244">
    <property type="term" value="P:lipopolysaccharide core region biosynthetic process"/>
    <property type="evidence" value="ECO:0007669"/>
    <property type="project" value="TreeGrafter"/>
</dbReference>
<dbReference type="HAMAP" id="MF_00409">
    <property type="entry name" value="LpxK"/>
    <property type="match status" value="1"/>
</dbReference>
<dbReference type="InterPro" id="IPR003758">
    <property type="entry name" value="LpxK"/>
</dbReference>
<dbReference type="InterPro" id="IPR027417">
    <property type="entry name" value="P-loop_NTPase"/>
</dbReference>
<dbReference type="NCBIfam" id="TIGR00682">
    <property type="entry name" value="lpxK"/>
    <property type="match status" value="1"/>
</dbReference>
<dbReference type="PANTHER" id="PTHR42724">
    <property type="entry name" value="TETRAACYLDISACCHARIDE 4'-KINASE"/>
    <property type="match status" value="1"/>
</dbReference>
<dbReference type="PANTHER" id="PTHR42724:SF1">
    <property type="entry name" value="TETRAACYLDISACCHARIDE 4'-KINASE, MITOCHONDRIAL-RELATED"/>
    <property type="match status" value="1"/>
</dbReference>
<dbReference type="Pfam" id="PF02606">
    <property type="entry name" value="LpxK"/>
    <property type="match status" value="1"/>
</dbReference>
<dbReference type="SUPFAM" id="SSF52540">
    <property type="entry name" value="P-loop containing nucleoside triphosphate hydrolases"/>
    <property type="match status" value="1"/>
</dbReference>